<organism>
    <name type="scientific">Human parainfluenza 4b virus (strain 68-333)</name>
    <name type="common">HPIV-4b</name>
    <dbReference type="NCBI Taxonomy" id="11227"/>
    <lineage>
        <taxon>Viruses</taxon>
        <taxon>Riboviria</taxon>
        <taxon>Orthornavirae</taxon>
        <taxon>Negarnaviricota</taxon>
        <taxon>Haploviricotina</taxon>
        <taxon>Monjiviricetes</taxon>
        <taxon>Mononegavirales</taxon>
        <taxon>Paramyxoviridae</taxon>
        <taxon>Rubulavirinae</taxon>
        <taxon>Orthorubulavirus</taxon>
        <taxon>Orthorubulavirus hominis</taxon>
        <taxon>Human orthorubulavirus 4</taxon>
    </lineage>
</organism>
<proteinExistence type="inferred from homology"/>
<comment type="function">
    <text evidence="1">Blocks host interferon signaling.</text>
</comment>
<comment type="RNA editing">
    <location>
        <position position="153" evidence="3"/>
    </location>
    <text>Partially edited. RNA editing at this position consists of an insertion of two guanine nucleotides. The sequence displayed here is the V protein, derived from the unedited RNA. The edited RNA gives rise to the P protein (AC P21738).</text>
</comment>
<comment type="similarity">
    <text evidence="4">Belongs to the paramyxoviruses V protein family.</text>
</comment>
<protein>
    <recommendedName>
        <fullName>Non-structural protein V</fullName>
    </recommendedName>
</protein>
<keyword id="KW-0945">Host-virus interaction</keyword>
<keyword id="KW-1090">Inhibition of host innate immune response by virus</keyword>
<keyword id="KW-1114">Inhibition of host interferon signaling pathway by virus</keyword>
<keyword id="KW-1089">Inhibition of host MDA5 by virus</keyword>
<keyword id="KW-1113">Inhibition of host RLR pathway by virus</keyword>
<keyword id="KW-1105">Inhibition of host STAT1 by virus</keyword>
<keyword id="KW-0922">Interferon antiviral system evasion</keyword>
<keyword id="KW-0479">Metal-binding</keyword>
<keyword id="KW-0691">RNA editing</keyword>
<keyword id="KW-0899">Viral immunoevasion</keyword>
<keyword id="KW-0862">Zinc</keyword>
<organismHost>
    <name type="scientific">Homo sapiens</name>
    <name type="common">Human</name>
    <dbReference type="NCBI Taxonomy" id="9606"/>
</organismHost>
<reference key="1">
    <citation type="journal article" date="1990" name="Virology">
        <title>Sequence analysis of the phosphoprotein (P) genes of human parainfluenza type 4A and 4B viruses and RNA editing at transcript of the P genes: the number of G residues added is imprecise.</title>
        <authorList>
            <person name="Kondo K."/>
            <person name="Bando H."/>
            <person name="Tsurudome M."/>
            <person name="Kawano M."/>
            <person name="Nishio M."/>
            <person name="Ito Y."/>
        </authorList>
    </citation>
    <scope>NUCLEOTIDE SEQUENCE [GENOMIC RNA]</scope>
    <scope>RNA EDITING</scope>
</reference>
<accession>P21740</accession>
<dbReference type="EMBL" id="M55976">
    <property type="protein sequence ID" value="AAA46807.1"/>
    <property type="molecule type" value="Genomic_RNA"/>
</dbReference>
<dbReference type="PIR" id="D43685">
    <property type="entry name" value="D43685"/>
</dbReference>
<dbReference type="GO" id="GO:0046872">
    <property type="term" value="F:metal ion binding"/>
    <property type="evidence" value="ECO:0007669"/>
    <property type="project" value="UniProtKB-KW"/>
</dbReference>
<dbReference type="GO" id="GO:0039554">
    <property type="term" value="P:symbiont-mediated suppression of host cytoplasmic pattern recognition receptor signaling pathway via inhibition of MDA-5 activity"/>
    <property type="evidence" value="ECO:0007669"/>
    <property type="project" value="UniProtKB-KW"/>
</dbReference>
<dbReference type="GO" id="GO:0039563">
    <property type="term" value="P:symbiont-mediated suppression of host JAK-STAT cascade via inhibition of STAT1 activity"/>
    <property type="evidence" value="ECO:0007669"/>
    <property type="project" value="UniProtKB-KW"/>
</dbReference>
<dbReference type="GO" id="GO:0039502">
    <property type="term" value="P:symbiont-mediated suppression of host type I interferon-mediated signaling pathway"/>
    <property type="evidence" value="ECO:0007669"/>
    <property type="project" value="UniProtKB-KW"/>
</dbReference>
<dbReference type="Gene3D" id="4.10.80.340">
    <property type="match status" value="1"/>
</dbReference>
<dbReference type="InterPro" id="IPR024279">
    <property type="entry name" value="Paramyx_V_Zn-bd"/>
</dbReference>
<dbReference type="Pfam" id="PF13008">
    <property type="entry name" value="zf-Paramyx-P"/>
    <property type="match status" value="1"/>
</dbReference>
<gene>
    <name type="primary">P/V</name>
</gene>
<name>V_PI4HB</name>
<evidence type="ECO:0000250" key="1"/>
<evidence type="ECO:0000256" key="2">
    <source>
        <dbReference type="SAM" id="MobiDB-lite"/>
    </source>
</evidence>
<evidence type="ECO:0000269" key="3">
    <source>
    </source>
</evidence>
<evidence type="ECO:0000305" key="4"/>
<sequence length="229" mass="25566">MSFEISVEEIDELIETGNLNIDYALKELGATSQPPPNRPLSQISKTEENNDETRTSKNSASAEAPAHASSPLRSHNEESEPGKQSSDGFSMISNRPQTGMLLMGSDTQSPSPSKTYQGLILDAKKRALNEPRRNQKTTNEHGNTNDTWIFKRGEYSHQERGLGYTESEIKNTIFIPRHRREHSISWVNGRTTISEWCNPCCAPVKSIASVEKCTCGRCPKICELCIRDP</sequence>
<feature type="chain" id="PRO_0000142818" description="Non-structural protein V">
    <location>
        <begin position="1"/>
        <end position="229"/>
    </location>
</feature>
<feature type="region of interest" description="Disordered" evidence="2">
    <location>
        <begin position="28"/>
        <end position="115"/>
    </location>
</feature>
<feature type="compositionally biased region" description="Basic and acidic residues" evidence="2">
    <location>
        <begin position="45"/>
        <end position="55"/>
    </location>
</feature>
<feature type="compositionally biased region" description="Low complexity" evidence="2">
    <location>
        <begin position="59"/>
        <end position="71"/>
    </location>
</feature>
<feature type="compositionally biased region" description="Polar residues" evidence="2">
    <location>
        <begin position="82"/>
        <end position="97"/>
    </location>
</feature>
<feature type="compositionally biased region" description="Polar residues" evidence="2">
    <location>
        <begin position="105"/>
        <end position="115"/>
    </location>
</feature>
<feature type="binding site" evidence="1">
    <location>
        <position position="178"/>
    </location>
    <ligand>
        <name>Zn(2+)</name>
        <dbReference type="ChEBI" id="CHEBI:29105"/>
        <label>1</label>
    </ligand>
</feature>
<feature type="binding site" evidence="1">
    <location>
        <position position="197"/>
    </location>
    <ligand>
        <name>Zn(2+)</name>
        <dbReference type="ChEBI" id="CHEBI:29105"/>
        <label>1</label>
    </ligand>
</feature>
<feature type="binding site" evidence="1">
    <location>
        <position position="201"/>
    </location>
    <ligand>
        <name>Zn(2+)</name>
        <dbReference type="ChEBI" id="CHEBI:29105"/>
        <label>2</label>
    </ligand>
</feature>
<feature type="binding site" evidence="1">
    <location>
        <position position="213"/>
    </location>
    <ligand>
        <name>Zn(2+)</name>
        <dbReference type="ChEBI" id="CHEBI:29105"/>
        <label>2</label>
    </ligand>
</feature>
<feature type="binding site" evidence="1">
    <location>
        <position position="215"/>
    </location>
    <ligand>
        <name>Zn(2+)</name>
        <dbReference type="ChEBI" id="CHEBI:29105"/>
        <label>2</label>
    </ligand>
</feature>
<feature type="binding site" evidence="1">
    <location>
        <position position="218"/>
    </location>
    <ligand>
        <name>Zn(2+)</name>
        <dbReference type="ChEBI" id="CHEBI:29105"/>
        <label>2</label>
    </ligand>
</feature>
<feature type="binding site" evidence="1">
    <location>
        <position position="222"/>
    </location>
    <ligand>
        <name>Zn(2+)</name>
        <dbReference type="ChEBI" id="CHEBI:29105"/>
        <label>1</label>
    </ligand>
</feature>
<feature type="binding site" evidence="1">
    <location>
        <position position="225"/>
    </location>
    <ligand>
        <name>Zn(2+)</name>
        <dbReference type="ChEBI" id="CHEBI:29105"/>
        <label>1</label>
    </ligand>
</feature>